<proteinExistence type="inferred from homology"/>
<sequence>MSERSLLVVVLAAGEGTRMASRLPKVLHRIAGRSMLHHVLETTRQAGATRVAVVIGPDREDVAAEAHRVRPDAQVFVQTERLGTAHAVLAARAALEEPADDVLVLYADTPLLRPETLENLRAPLADGAAVAVLGFRPADPTGYGRLLTQGDALVAIREEKDATPDERRVDFCNAGVMALRAREALSILTRIGNANAKGEYYLTDAVEIARADGLSAVATEAEVDEVAGVNSRLQLAEAEAILQGRLRRAAMAGGATLVAPETVFLSVDTRLGRDVLVEPNVVFGPGVTVEDDVVIHAFSHLEGAHLERGVSIGPYARLRPGTRLGEGVRIGNFVETKAALIDAGAKVNHLSYVGDAHVGSNANVGAGTITCNYDGFSKHRTEIGAGAFIGTNSSLVAPVSVGAGAYIGSGSVITDDVPADALALGRGRQAVKEGWAAALRAARGKPKV</sequence>
<protein>
    <recommendedName>
        <fullName evidence="1">Bifunctional protein GlmU</fullName>
    </recommendedName>
    <domain>
        <recommendedName>
            <fullName evidence="1">UDP-N-acetylglucosamine pyrophosphorylase</fullName>
            <ecNumber evidence="1">2.7.7.23</ecNumber>
        </recommendedName>
        <alternativeName>
            <fullName evidence="1">N-acetylglucosamine-1-phosphate uridyltransferase</fullName>
        </alternativeName>
    </domain>
    <domain>
        <recommendedName>
            <fullName evidence="1">Glucosamine-1-phosphate N-acetyltransferase</fullName>
            <ecNumber evidence="1">2.3.1.157</ecNumber>
        </recommendedName>
    </domain>
</protein>
<evidence type="ECO:0000255" key="1">
    <source>
        <dbReference type="HAMAP-Rule" id="MF_01631"/>
    </source>
</evidence>
<organism>
    <name type="scientific">Azorhizobium caulinodans (strain ATCC 43989 / DSM 5975 / JCM 20966 / LMG 6465 / NBRC 14845 / NCIMB 13405 / ORS 571)</name>
    <dbReference type="NCBI Taxonomy" id="438753"/>
    <lineage>
        <taxon>Bacteria</taxon>
        <taxon>Pseudomonadati</taxon>
        <taxon>Pseudomonadota</taxon>
        <taxon>Alphaproteobacteria</taxon>
        <taxon>Hyphomicrobiales</taxon>
        <taxon>Xanthobacteraceae</taxon>
        <taxon>Azorhizobium</taxon>
    </lineage>
</organism>
<name>GLMU_AZOC5</name>
<reference key="1">
    <citation type="submission" date="2007-04" db="EMBL/GenBank/DDBJ databases">
        <title>Complete genome sequence of the nitrogen-fixing bacterium Azorhizobium caulinodans ORS571.</title>
        <authorList>
            <person name="Lee K.B."/>
            <person name="Backer P.D."/>
            <person name="Aono T."/>
            <person name="Liu C.T."/>
            <person name="Suzuki S."/>
            <person name="Suzuki T."/>
            <person name="Kaneko T."/>
            <person name="Yamada M."/>
            <person name="Tabata S."/>
            <person name="Kupfer D.M."/>
            <person name="Najar F.Z."/>
            <person name="Wiley G.B."/>
            <person name="Roe B."/>
            <person name="Binnewies T."/>
            <person name="Ussery D."/>
            <person name="Vereecke D."/>
            <person name="Gevers D."/>
            <person name="Holsters M."/>
            <person name="Oyaizu H."/>
        </authorList>
    </citation>
    <scope>NUCLEOTIDE SEQUENCE [LARGE SCALE GENOMIC DNA]</scope>
    <source>
        <strain>ATCC 43989 / DSM 5975 / JCM 20966 / LMG 6465 / NBRC 14845 / NCIMB 13405 / ORS 571</strain>
    </source>
</reference>
<accession>A8I4D4</accession>
<comment type="function">
    <text evidence="1">Catalyzes the last two sequential reactions in the de novo biosynthetic pathway for UDP-N-acetylglucosamine (UDP-GlcNAc). The C-terminal domain catalyzes the transfer of acetyl group from acetyl coenzyme A to glucosamine-1-phosphate (GlcN-1-P) to produce N-acetylglucosamine-1-phosphate (GlcNAc-1-P), which is converted into UDP-GlcNAc by the transfer of uridine 5-monophosphate (from uridine 5-triphosphate), a reaction catalyzed by the N-terminal domain.</text>
</comment>
<comment type="catalytic activity">
    <reaction evidence="1">
        <text>alpha-D-glucosamine 1-phosphate + acetyl-CoA = N-acetyl-alpha-D-glucosamine 1-phosphate + CoA + H(+)</text>
        <dbReference type="Rhea" id="RHEA:13725"/>
        <dbReference type="ChEBI" id="CHEBI:15378"/>
        <dbReference type="ChEBI" id="CHEBI:57287"/>
        <dbReference type="ChEBI" id="CHEBI:57288"/>
        <dbReference type="ChEBI" id="CHEBI:57776"/>
        <dbReference type="ChEBI" id="CHEBI:58516"/>
        <dbReference type="EC" id="2.3.1.157"/>
    </reaction>
</comment>
<comment type="catalytic activity">
    <reaction evidence="1">
        <text>N-acetyl-alpha-D-glucosamine 1-phosphate + UTP + H(+) = UDP-N-acetyl-alpha-D-glucosamine + diphosphate</text>
        <dbReference type="Rhea" id="RHEA:13509"/>
        <dbReference type="ChEBI" id="CHEBI:15378"/>
        <dbReference type="ChEBI" id="CHEBI:33019"/>
        <dbReference type="ChEBI" id="CHEBI:46398"/>
        <dbReference type="ChEBI" id="CHEBI:57705"/>
        <dbReference type="ChEBI" id="CHEBI:57776"/>
        <dbReference type="EC" id="2.7.7.23"/>
    </reaction>
</comment>
<comment type="cofactor">
    <cofactor evidence="1">
        <name>Mg(2+)</name>
        <dbReference type="ChEBI" id="CHEBI:18420"/>
    </cofactor>
    <text evidence="1">Binds 1 Mg(2+) ion per subunit.</text>
</comment>
<comment type="pathway">
    <text evidence="1">Nucleotide-sugar biosynthesis; UDP-N-acetyl-alpha-D-glucosamine biosynthesis; N-acetyl-alpha-D-glucosamine 1-phosphate from alpha-D-glucosamine 6-phosphate (route II): step 2/2.</text>
</comment>
<comment type="pathway">
    <text evidence="1">Nucleotide-sugar biosynthesis; UDP-N-acetyl-alpha-D-glucosamine biosynthesis; UDP-N-acetyl-alpha-D-glucosamine from N-acetyl-alpha-D-glucosamine 1-phosphate: step 1/1.</text>
</comment>
<comment type="pathway">
    <text evidence="1">Bacterial outer membrane biogenesis; LPS lipid A biosynthesis.</text>
</comment>
<comment type="subunit">
    <text evidence="1">Homotrimer.</text>
</comment>
<comment type="subcellular location">
    <subcellularLocation>
        <location evidence="1">Cytoplasm</location>
    </subcellularLocation>
</comment>
<comment type="similarity">
    <text evidence="1">In the N-terminal section; belongs to the N-acetylglucosamine-1-phosphate uridyltransferase family.</text>
</comment>
<comment type="similarity">
    <text evidence="1">In the C-terminal section; belongs to the transferase hexapeptide repeat family.</text>
</comment>
<gene>
    <name evidence="1" type="primary">glmU</name>
    <name type="ordered locus">AZC_1718</name>
</gene>
<keyword id="KW-0012">Acyltransferase</keyword>
<keyword id="KW-0133">Cell shape</keyword>
<keyword id="KW-0961">Cell wall biogenesis/degradation</keyword>
<keyword id="KW-0963">Cytoplasm</keyword>
<keyword id="KW-0460">Magnesium</keyword>
<keyword id="KW-0479">Metal-binding</keyword>
<keyword id="KW-0511">Multifunctional enzyme</keyword>
<keyword id="KW-0548">Nucleotidyltransferase</keyword>
<keyword id="KW-0573">Peptidoglycan synthesis</keyword>
<keyword id="KW-1185">Reference proteome</keyword>
<keyword id="KW-0677">Repeat</keyword>
<keyword id="KW-0808">Transferase</keyword>
<dbReference type="EC" id="2.7.7.23" evidence="1"/>
<dbReference type="EC" id="2.3.1.157" evidence="1"/>
<dbReference type="EMBL" id="AP009384">
    <property type="protein sequence ID" value="BAF87716.1"/>
    <property type="molecule type" value="Genomic_DNA"/>
</dbReference>
<dbReference type="RefSeq" id="WP_012170246.1">
    <property type="nucleotide sequence ID" value="NC_009937.1"/>
</dbReference>
<dbReference type="SMR" id="A8I4D4"/>
<dbReference type="STRING" id="438753.AZC_1718"/>
<dbReference type="KEGG" id="azc:AZC_1718"/>
<dbReference type="eggNOG" id="COG1207">
    <property type="taxonomic scope" value="Bacteria"/>
</dbReference>
<dbReference type="HOGENOM" id="CLU_029499_15_2_5"/>
<dbReference type="UniPathway" id="UPA00113">
    <property type="reaction ID" value="UER00532"/>
</dbReference>
<dbReference type="UniPathway" id="UPA00113">
    <property type="reaction ID" value="UER00533"/>
</dbReference>
<dbReference type="UniPathway" id="UPA00973"/>
<dbReference type="Proteomes" id="UP000000270">
    <property type="component" value="Chromosome"/>
</dbReference>
<dbReference type="GO" id="GO:0005737">
    <property type="term" value="C:cytoplasm"/>
    <property type="evidence" value="ECO:0007669"/>
    <property type="project" value="UniProtKB-SubCell"/>
</dbReference>
<dbReference type="GO" id="GO:0016020">
    <property type="term" value="C:membrane"/>
    <property type="evidence" value="ECO:0007669"/>
    <property type="project" value="GOC"/>
</dbReference>
<dbReference type="GO" id="GO:0019134">
    <property type="term" value="F:glucosamine-1-phosphate N-acetyltransferase activity"/>
    <property type="evidence" value="ECO:0007669"/>
    <property type="project" value="UniProtKB-UniRule"/>
</dbReference>
<dbReference type="GO" id="GO:0000287">
    <property type="term" value="F:magnesium ion binding"/>
    <property type="evidence" value="ECO:0007669"/>
    <property type="project" value="UniProtKB-UniRule"/>
</dbReference>
<dbReference type="GO" id="GO:0003977">
    <property type="term" value="F:UDP-N-acetylglucosamine diphosphorylase activity"/>
    <property type="evidence" value="ECO:0007669"/>
    <property type="project" value="UniProtKB-UniRule"/>
</dbReference>
<dbReference type="GO" id="GO:0000902">
    <property type="term" value="P:cell morphogenesis"/>
    <property type="evidence" value="ECO:0007669"/>
    <property type="project" value="UniProtKB-UniRule"/>
</dbReference>
<dbReference type="GO" id="GO:0071555">
    <property type="term" value="P:cell wall organization"/>
    <property type="evidence" value="ECO:0007669"/>
    <property type="project" value="UniProtKB-KW"/>
</dbReference>
<dbReference type="GO" id="GO:0009245">
    <property type="term" value="P:lipid A biosynthetic process"/>
    <property type="evidence" value="ECO:0007669"/>
    <property type="project" value="UniProtKB-UniRule"/>
</dbReference>
<dbReference type="GO" id="GO:0009252">
    <property type="term" value="P:peptidoglycan biosynthetic process"/>
    <property type="evidence" value="ECO:0007669"/>
    <property type="project" value="UniProtKB-UniRule"/>
</dbReference>
<dbReference type="GO" id="GO:0008360">
    <property type="term" value="P:regulation of cell shape"/>
    <property type="evidence" value="ECO:0007669"/>
    <property type="project" value="UniProtKB-KW"/>
</dbReference>
<dbReference type="GO" id="GO:0006048">
    <property type="term" value="P:UDP-N-acetylglucosamine biosynthetic process"/>
    <property type="evidence" value="ECO:0007669"/>
    <property type="project" value="UniProtKB-UniPathway"/>
</dbReference>
<dbReference type="CDD" id="cd02540">
    <property type="entry name" value="GT2_GlmU_N_bac"/>
    <property type="match status" value="1"/>
</dbReference>
<dbReference type="CDD" id="cd03353">
    <property type="entry name" value="LbH_GlmU_C"/>
    <property type="match status" value="1"/>
</dbReference>
<dbReference type="Gene3D" id="2.160.10.10">
    <property type="entry name" value="Hexapeptide repeat proteins"/>
    <property type="match status" value="1"/>
</dbReference>
<dbReference type="Gene3D" id="3.90.550.10">
    <property type="entry name" value="Spore Coat Polysaccharide Biosynthesis Protein SpsA, Chain A"/>
    <property type="match status" value="1"/>
</dbReference>
<dbReference type="HAMAP" id="MF_01631">
    <property type="entry name" value="GlmU"/>
    <property type="match status" value="1"/>
</dbReference>
<dbReference type="InterPro" id="IPR005882">
    <property type="entry name" value="Bifunctional_GlmU"/>
</dbReference>
<dbReference type="InterPro" id="IPR050065">
    <property type="entry name" value="GlmU-like"/>
</dbReference>
<dbReference type="InterPro" id="IPR038009">
    <property type="entry name" value="GlmU_C_LbH"/>
</dbReference>
<dbReference type="InterPro" id="IPR001451">
    <property type="entry name" value="Hexapep"/>
</dbReference>
<dbReference type="InterPro" id="IPR018357">
    <property type="entry name" value="Hexapep_transf_CS"/>
</dbReference>
<dbReference type="InterPro" id="IPR025877">
    <property type="entry name" value="MobA-like_NTP_Trfase"/>
</dbReference>
<dbReference type="InterPro" id="IPR029044">
    <property type="entry name" value="Nucleotide-diphossugar_trans"/>
</dbReference>
<dbReference type="InterPro" id="IPR011004">
    <property type="entry name" value="Trimer_LpxA-like_sf"/>
</dbReference>
<dbReference type="NCBIfam" id="TIGR01173">
    <property type="entry name" value="glmU"/>
    <property type="match status" value="1"/>
</dbReference>
<dbReference type="NCBIfam" id="NF010933">
    <property type="entry name" value="PRK14353.1"/>
    <property type="match status" value="1"/>
</dbReference>
<dbReference type="PANTHER" id="PTHR43584:SF3">
    <property type="entry name" value="BIFUNCTIONAL PROTEIN GLMU"/>
    <property type="match status" value="1"/>
</dbReference>
<dbReference type="PANTHER" id="PTHR43584">
    <property type="entry name" value="NUCLEOTIDYL TRANSFERASE"/>
    <property type="match status" value="1"/>
</dbReference>
<dbReference type="Pfam" id="PF00132">
    <property type="entry name" value="Hexapep"/>
    <property type="match status" value="2"/>
</dbReference>
<dbReference type="Pfam" id="PF12804">
    <property type="entry name" value="NTP_transf_3"/>
    <property type="match status" value="1"/>
</dbReference>
<dbReference type="SUPFAM" id="SSF53448">
    <property type="entry name" value="Nucleotide-diphospho-sugar transferases"/>
    <property type="match status" value="1"/>
</dbReference>
<dbReference type="SUPFAM" id="SSF51161">
    <property type="entry name" value="Trimeric LpxA-like enzymes"/>
    <property type="match status" value="1"/>
</dbReference>
<dbReference type="PROSITE" id="PS00101">
    <property type="entry name" value="HEXAPEP_TRANSFERASES"/>
    <property type="match status" value="1"/>
</dbReference>
<feature type="chain" id="PRO_1000073644" description="Bifunctional protein GlmU">
    <location>
        <begin position="1"/>
        <end position="448"/>
    </location>
</feature>
<feature type="region of interest" description="Pyrophosphorylase" evidence="1">
    <location>
        <begin position="1"/>
        <end position="232"/>
    </location>
</feature>
<feature type="region of interest" description="Linker" evidence="1">
    <location>
        <begin position="233"/>
        <end position="253"/>
    </location>
</feature>
<feature type="region of interest" description="N-acetyltransferase" evidence="1">
    <location>
        <begin position="254"/>
        <end position="448"/>
    </location>
</feature>
<feature type="active site" description="Proton acceptor" evidence="1">
    <location>
        <position position="349"/>
    </location>
</feature>
<feature type="binding site" evidence="1">
    <location>
        <begin position="11"/>
        <end position="14"/>
    </location>
    <ligand>
        <name>UDP-N-acetyl-alpha-D-glucosamine</name>
        <dbReference type="ChEBI" id="CHEBI:57705"/>
    </ligand>
</feature>
<feature type="binding site" evidence="1">
    <location>
        <position position="25"/>
    </location>
    <ligand>
        <name>UDP-N-acetyl-alpha-D-glucosamine</name>
        <dbReference type="ChEBI" id="CHEBI:57705"/>
    </ligand>
</feature>
<feature type="binding site" evidence="1">
    <location>
        <position position="78"/>
    </location>
    <ligand>
        <name>UDP-N-acetyl-alpha-D-glucosamine</name>
        <dbReference type="ChEBI" id="CHEBI:57705"/>
    </ligand>
</feature>
<feature type="binding site" evidence="1">
    <location>
        <begin position="83"/>
        <end position="84"/>
    </location>
    <ligand>
        <name>UDP-N-acetyl-alpha-D-glucosamine</name>
        <dbReference type="ChEBI" id="CHEBI:57705"/>
    </ligand>
</feature>
<feature type="binding site" evidence="1">
    <location>
        <position position="108"/>
    </location>
    <ligand>
        <name>Mg(2+)</name>
        <dbReference type="ChEBI" id="CHEBI:18420"/>
    </ligand>
</feature>
<feature type="binding site" evidence="1">
    <location>
        <position position="144"/>
    </location>
    <ligand>
        <name>UDP-N-acetyl-alpha-D-glucosamine</name>
        <dbReference type="ChEBI" id="CHEBI:57705"/>
    </ligand>
</feature>
<feature type="binding site" evidence="1">
    <location>
        <position position="158"/>
    </location>
    <ligand>
        <name>UDP-N-acetyl-alpha-D-glucosamine</name>
        <dbReference type="ChEBI" id="CHEBI:57705"/>
    </ligand>
</feature>
<feature type="binding site" evidence="1">
    <location>
        <position position="173"/>
    </location>
    <ligand>
        <name>UDP-N-acetyl-alpha-D-glucosamine</name>
        <dbReference type="ChEBI" id="CHEBI:57705"/>
    </ligand>
</feature>
<feature type="binding site" evidence="1">
    <location>
        <position position="230"/>
    </location>
    <ligand>
        <name>Mg(2+)</name>
        <dbReference type="ChEBI" id="CHEBI:18420"/>
    </ligand>
</feature>
<feature type="binding site" evidence="1">
    <location>
        <position position="230"/>
    </location>
    <ligand>
        <name>UDP-N-acetyl-alpha-D-glucosamine</name>
        <dbReference type="ChEBI" id="CHEBI:57705"/>
    </ligand>
</feature>
<feature type="binding site" evidence="1">
    <location>
        <position position="319"/>
    </location>
    <ligand>
        <name>UDP-N-acetyl-alpha-D-glucosamine</name>
        <dbReference type="ChEBI" id="CHEBI:57705"/>
    </ligand>
</feature>
<feature type="binding site" evidence="1">
    <location>
        <position position="337"/>
    </location>
    <ligand>
        <name>UDP-N-acetyl-alpha-D-glucosamine</name>
        <dbReference type="ChEBI" id="CHEBI:57705"/>
    </ligand>
</feature>
<feature type="binding site" evidence="1">
    <location>
        <position position="352"/>
    </location>
    <ligand>
        <name>UDP-N-acetyl-alpha-D-glucosamine</name>
        <dbReference type="ChEBI" id="CHEBI:57705"/>
    </ligand>
</feature>
<feature type="binding site" evidence="1">
    <location>
        <position position="363"/>
    </location>
    <ligand>
        <name>UDP-N-acetyl-alpha-D-glucosamine</name>
        <dbReference type="ChEBI" id="CHEBI:57705"/>
    </ligand>
</feature>
<feature type="binding site" evidence="1">
    <location>
        <position position="366"/>
    </location>
    <ligand>
        <name>acetyl-CoA</name>
        <dbReference type="ChEBI" id="CHEBI:57288"/>
    </ligand>
</feature>
<feature type="binding site" evidence="1">
    <location>
        <begin position="372"/>
        <end position="373"/>
    </location>
    <ligand>
        <name>acetyl-CoA</name>
        <dbReference type="ChEBI" id="CHEBI:57288"/>
    </ligand>
</feature>
<feature type="binding site" evidence="1">
    <location>
        <position position="409"/>
    </location>
    <ligand>
        <name>acetyl-CoA</name>
        <dbReference type="ChEBI" id="CHEBI:57288"/>
    </ligand>
</feature>
<feature type="binding site" evidence="1">
    <location>
        <position position="426"/>
    </location>
    <ligand>
        <name>acetyl-CoA</name>
        <dbReference type="ChEBI" id="CHEBI:57288"/>
    </ligand>
</feature>